<reference key="1">
    <citation type="submission" date="2006-12" db="EMBL/GenBank/DDBJ databases">
        <title>Complete sequence of Mycobacterium vanbaalenii PYR-1.</title>
        <authorList>
            <consortium name="US DOE Joint Genome Institute"/>
            <person name="Copeland A."/>
            <person name="Lucas S."/>
            <person name="Lapidus A."/>
            <person name="Barry K."/>
            <person name="Detter J.C."/>
            <person name="Glavina del Rio T."/>
            <person name="Hammon N."/>
            <person name="Israni S."/>
            <person name="Dalin E."/>
            <person name="Tice H."/>
            <person name="Pitluck S."/>
            <person name="Singan V."/>
            <person name="Schmutz J."/>
            <person name="Larimer F."/>
            <person name="Land M."/>
            <person name="Hauser L."/>
            <person name="Kyrpides N."/>
            <person name="Anderson I.J."/>
            <person name="Miller C."/>
            <person name="Richardson P."/>
        </authorList>
    </citation>
    <scope>NUCLEOTIDE SEQUENCE [LARGE SCALE GENOMIC DNA]</scope>
    <source>
        <strain>DSM 7251 / JCM 13017 / BCRC 16820 / KCTC 9966 / NRRL B-24157 / PYR-1</strain>
    </source>
</reference>
<evidence type="ECO:0000255" key="1">
    <source>
        <dbReference type="HAMAP-Rule" id="MF_01609"/>
    </source>
</evidence>
<proteinExistence type="inferred from homology"/>
<gene>
    <name type="ordered locus">Mvan_0736</name>
</gene>
<dbReference type="EC" id="6.3.2.2" evidence="1"/>
<dbReference type="EMBL" id="CP000511">
    <property type="protein sequence ID" value="ABM11574.1"/>
    <property type="molecule type" value="Genomic_DNA"/>
</dbReference>
<dbReference type="RefSeq" id="WP_011778011.1">
    <property type="nucleotide sequence ID" value="NC_008726.1"/>
</dbReference>
<dbReference type="SMR" id="A1T324"/>
<dbReference type="STRING" id="350058.Mvan_0736"/>
<dbReference type="KEGG" id="mva:Mvan_0736"/>
<dbReference type="eggNOG" id="COG2170">
    <property type="taxonomic scope" value="Bacteria"/>
</dbReference>
<dbReference type="HOGENOM" id="CLU_044848_1_0_11"/>
<dbReference type="Proteomes" id="UP000009159">
    <property type="component" value="Chromosome"/>
</dbReference>
<dbReference type="GO" id="GO:0005524">
    <property type="term" value="F:ATP binding"/>
    <property type="evidence" value="ECO:0007669"/>
    <property type="project" value="UniProtKB-KW"/>
</dbReference>
<dbReference type="GO" id="GO:0004357">
    <property type="term" value="F:glutamate-cysteine ligase activity"/>
    <property type="evidence" value="ECO:0007669"/>
    <property type="project" value="UniProtKB-EC"/>
</dbReference>
<dbReference type="GO" id="GO:0042398">
    <property type="term" value="P:modified amino acid biosynthetic process"/>
    <property type="evidence" value="ECO:0007669"/>
    <property type="project" value="InterPro"/>
</dbReference>
<dbReference type="Gene3D" id="3.30.590.20">
    <property type="match status" value="1"/>
</dbReference>
<dbReference type="HAMAP" id="MF_01609">
    <property type="entry name" value="Glu_cys_ligase_2"/>
    <property type="match status" value="1"/>
</dbReference>
<dbReference type="InterPro" id="IPR050141">
    <property type="entry name" value="GCL_type2/YbdK_subfam"/>
</dbReference>
<dbReference type="InterPro" id="IPR006336">
    <property type="entry name" value="GCS2"/>
</dbReference>
<dbReference type="InterPro" id="IPR014746">
    <property type="entry name" value="Gln_synth/guanido_kin_cat_dom"/>
</dbReference>
<dbReference type="InterPro" id="IPR011793">
    <property type="entry name" value="YbdK"/>
</dbReference>
<dbReference type="NCBIfam" id="TIGR02050">
    <property type="entry name" value="gshA_cyan_rel"/>
    <property type="match status" value="1"/>
</dbReference>
<dbReference type="NCBIfam" id="NF010042">
    <property type="entry name" value="PRK13517.1-2"/>
    <property type="match status" value="1"/>
</dbReference>
<dbReference type="NCBIfam" id="NF010043">
    <property type="entry name" value="PRK13517.1-3"/>
    <property type="match status" value="1"/>
</dbReference>
<dbReference type="NCBIfam" id="NF010044">
    <property type="entry name" value="PRK13517.1-4"/>
    <property type="match status" value="1"/>
</dbReference>
<dbReference type="PANTHER" id="PTHR36510">
    <property type="entry name" value="GLUTAMATE--CYSTEINE LIGASE 2-RELATED"/>
    <property type="match status" value="1"/>
</dbReference>
<dbReference type="PANTHER" id="PTHR36510:SF1">
    <property type="entry name" value="GLUTAMATE--CYSTEINE LIGASE 2-RELATED"/>
    <property type="match status" value="1"/>
</dbReference>
<dbReference type="Pfam" id="PF04107">
    <property type="entry name" value="GCS2"/>
    <property type="match status" value="1"/>
</dbReference>
<dbReference type="SUPFAM" id="SSF55931">
    <property type="entry name" value="Glutamine synthetase/guanido kinase"/>
    <property type="match status" value="1"/>
</dbReference>
<feature type="chain" id="PRO_0000291501" description="Putative glutamate--cysteine ligase 2-1">
    <location>
        <begin position="1"/>
        <end position="380"/>
    </location>
</feature>
<sequence>MSSLAADQRADGRIDFVGSVRPTVGVEWEFALVDATTRDLSNEAASVIAEIGENPRVHKELLRNTVEVVTGICANAGEAMEDLASTLRPVREVVRERGMDLFCAGTHPFADWSVQKLTDAPRYAELIKRTQWWGRQMLIWGVHVHVGVSSAHKVMPIITALLHQYPHLLALSASSPYWDGEDTGYASNRAMMFQQLPTAGLPFHFQEWREFERFVSDQKKTGIIDHMNEIRWDIRPSPHLGTIEVRIFDGVSNLHELSALVALTHCLIVDLDRRLDAGESLPVMPPWHVQENKWRAARYGLDAIIILDADSNERLVTEDLDDLLERLQPVAKRLSCVEELSRVPDIYHNGASYQRQRRVAEEHDGDLRAVVDALVSELVL</sequence>
<organism>
    <name type="scientific">Mycolicibacterium vanbaalenii (strain DSM 7251 / JCM 13017 / BCRC 16820 / KCTC 9966 / NRRL B-24157 / PYR-1)</name>
    <name type="common">Mycobacterium vanbaalenii</name>
    <dbReference type="NCBI Taxonomy" id="350058"/>
    <lineage>
        <taxon>Bacteria</taxon>
        <taxon>Bacillati</taxon>
        <taxon>Actinomycetota</taxon>
        <taxon>Actinomycetes</taxon>
        <taxon>Mycobacteriales</taxon>
        <taxon>Mycobacteriaceae</taxon>
        <taxon>Mycolicibacterium</taxon>
    </lineage>
</organism>
<name>GCS21_MYCVP</name>
<comment type="function">
    <text evidence="1">ATP-dependent carboxylate-amine ligase which exhibits weak glutamate--cysteine ligase activity.</text>
</comment>
<comment type="catalytic activity">
    <reaction evidence="1">
        <text>L-cysteine + L-glutamate + ATP = gamma-L-glutamyl-L-cysteine + ADP + phosphate + H(+)</text>
        <dbReference type="Rhea" id="RHEA:13285"/>
        <dbReference type="ChEBI" id="CHEBI:15378"/>
        <dbReference type="ChEBI" id="CHEBI:29985"/>
        <dbReference type="ChEBI" id="CHEBI:30616"/>
        <dbReference type="ChEBI" id="CHEBI:35235"/>
        <dbReference type="ChEBI" id="CHEBI:43474"/>
        <dbReference type="ChEBI" id="CHEBI:58173"/>
        <dbReference type="ChEBI" id="CHEBI:456216"/>
        <dbReference type="EC" id="6.3.2.2"/>
    </reaction>
</comment>
<comment type="similarity">
    <text evidence="1">Belongs to the glutamate--cysteine ligase type 2 family. YbdK subfamily.</text>
</comment>
<accession>A1T324</accession>
<keyword id="KW-0067">ATP-binding</keyword>
<keyword id="KW-0436">Ligase</keyword>
<keyword id="KW-0547">Nucleotide-binding</keyword>
<protein>
    <recommendedName>
        <fullName evidence="1">Putative glutamate--cysteine ligase 2-1</fullName>
        <ecNumber evidence="1">6.3.2.2</ecNumber>
    </recommendedName>
    <alternativeName>
        <fullName evidence="1">Gamma-glutamylcysteine synthetase 2-1</fullName>
        <shortName evidence="1">GCS 2-1</shortName>
        <shortName evidence="1">Gamma-GCS 2-1</shortName>
    </alternativeName>
</protein>